<name>CAIC_ECOSE</name>
<dbReference type="EC" id="6.2.1.48" evidence="1"/>
<dbReference type="EMBL" id="AP009240">
    <property type="protein sequence ID" value="BAG75562.1"/>
    <property type="status" value="ALT_INIT"/>
    <property type="molecule type" value="Genomic_DNA"/>
</dbReference>
<dbReference type="RefSeq" id="WP_000351348.1">
    <property type="nucleotide sequence ID" value="NC_011415.1"/>
</dbReference>
<dbReference type="SMR" id="B6HYY8"/>
<dbReference type="KEGG" id="ecy:ECSE_0038"/>
<dbReference type="HOGENOM" id="CLU_000022_59_0_6"/>
<dbReference type="UniPathway" id="UPA00117"/>
<dbReference type="Proteomes" id="UP000008199">
    <property type="component" value="Chromosome"/>
</dbReference>
<dbReference type="GO" id="GO:0051108">
    <property type="term" value="F:carnitine-CoA ligase activity"/>
    <property type="evidence" value="ECO:0007669"/>
    <property type="project" value="InterPro"/>
</dbReference>
<dbReference type="GO" id="GO:0051109">
    <property type="term" value="F:crotonobetaine-CoA ligase activity"/>
    <property type="evidence" value="ECO:0007669"/>
    <property type="project" value="InterPro"/>
</dbReference>
<dbReference type="GO" id="GO:0031956">
    <property type="term" value="F:medium-chain fatty acid-CoA ligase activity"/>
    <property type="evidence" value="ECO:0007669"/>
    <property type="project" value="TreeGrafter"/>
</dbReference>
<dbReference type="GO" id="GO:0009437">
    <property type="term" value="P:carnitine metabolic process"/>
    <property type="evidence" value="ECO:0007669"/>
    <property type="project" value="UniProtKB-UniRule"/>
</dbReference>
<dbReference type="GO" id="GO:0006631">
    <property type="term" value="P:fatty acid metabolic process"/>
    <property type="evidence" value="ECO:0007669"/>
    <property type="project" value="TreeGrafter"/>
</dbReference>
<dbReference type="CDD" id="cd05934">
    <property type="entry name" value="FACL_DitJ_like"/>
    <property type="match status" value="1"/>
</dbReference>
<dbReference type="FunFam" id="3.30.300.30:FF:000011">
    <property type="entry name" value="Crotonobetaine/carnitine--CoA ligase"/>
    <property type="match status" value="1"/>
</dbReference>
<dbReference type="FunFam" id="3.40.50.12780:FF:000017">
    <property type="entry name" value="Crotonobetaine/carnitine--CoA ligase"/>
    <property type="match status" value="1"/>
</dbReference>
<dbReference type="Gene3D" id="3.30.300.30">
    <property type="match status" value="1"/>
</dbReference>
<dbReference type="Gene3D" id="3.40.50.12780">
    <property type="entry name" value="N-terminal domain of ligase-like"/>
    <property type="match status" value="1"/>
</dbReference>
<dbReference type="HAMAP" id="MF_01524">
    <property type="entry name" value="CaiC"/>
    <property type="match status" value="1"/>
</dbReference>
<dbReference type="InterPro" id="IPR025110">
    <property type="entry name" value="AMP-bd_C"/>
</dbReference>
<dbReference type="InterPro" id="IPR045851">
    <property type="entry name" value="AMP-bd_C_sf"/>
</dbReference>
<dbReference type="InterPro" id="IPR020845">
    <property type="entry name" value="AMP-binding_CS"/>
</dbReference>
<dbReference type="InterPro" id="IPR000873">
    <property type="entry name" value="AMP-dep_synth/lig_dom"/>
</dbReference>
<dbReference type="InterPro" id="IPR042099">
    <property type="entry name" value="ANL_N_sf"/>
</dbReference>
<dbReference type="InterPro" id="IPR023456">
    <property type="entry name" value="CaiC"/>
</dbReference>
<dbReference type="NCBIfam" id="NF005947">
    <property type="entry name" value="PRK08008.1"/>
    <property type="match status" value="1"/>
</dbReference>
<dbReference type="PANTHER" id="PTHR43201">
    <property type="entry name" value="ACYL-COA SYNTHETASE"/>
    <property type="match status" value="1"/>
</dbReference>
<dbReference type="PANTHER" id="PTHR43201:SF5">
    <property type="entry name" value="MEDIUM-CHAIN ACYL-COA LIGASE ACSF2, MITOCHONDRIAL"/>
    <property type="match status" value="1"/>
</dbReference>
<dbReference type="Pfam" id="PF00501">
    <property type="entry name" value="AMP-binding"/>
    <property type="match status" value="1"/>
</dbReference>
<dbReference type="Pfam" id="PF13193">
    <property type="entry name" value="AMP-binding_C"/>
    <property type="match status" value="1"/>
</dbReference>
<dbReference type="SUPFAM" id="SSF56801">
    <property type="entry name" value="Acetyl-CoA synthetase-like"/>
    <property type="match status" value="1"/>
</dbReference>
<dbReference type="PROSITE" id="PS00455">
    <property type="entry name" value="AMP_BINDING"/>
    <property type="match status" value="1"/>
</dbReference>
<sequence>MDIIGGQHLRQMWDDLADVYGHKTALICESSGGVVNRYSYLELNQEINRTANLFYTLGIRKGDKVALHLDNCPEFIFCWFGLAKIGAIMVPINARLLREESAWILQNSQACLLVTSAQFYPMYQQIQQEDATQLRHICLTDVALPADDGVSSFTQLKNQQPATLCYAPPLLTDDTAEILFTSGTTSRPKGVVITHYNLRFAGYYSAWQCALRDDDVYLTVMPAFHIDCQCTAAMAAFSAGATFVLVEKYSARAFWGQVQKYRATITECIPMMIRTLMVQPPSANDRQHRLREVMFYLNLSEQEKDAFCERFGVRLLTSYGMTETIVGIIGDRPGDKRRWPSIGRAGFCYEAEIRDDHNRPLPAGEIGEICIKGVPGKTIFKEYFLNPKATAKVLEADGWLHTGDTGYCDEEGFFYFVDRRCNMIKRGGENVSCVELENIIATHPKIQDIVVVGIKDSIRDEAIKAFVVLNEGETLSEEEFFRFCEQNMAKFKVPSYLEIRKDLPRNCSGKIIRKNLK</sequence>
<protein>
    <recommendedName>
        <fullName evidence="1">Crotonobetaine/carnitine--CoA ligase</fullName>
        <ecNumber evidence="1">6.2.1.48</ecNumber>
    </recommendedName>
</protein>
<comment type="function">
    <text evidence="1">Catalyzes the transfer of CoA to carnitine, generating the initial carnitinyl-CoA needed for the CaiB reaction cycle. Also has activity toward crotonobetaine and gamma-butyrobetaine.</text>
</comment>
<comment type="catalytic activity">
    <reaction evidence="1">
        <text>4-(trimethylamino)butanoate + ATP + CoA = 4-(trimethylamino)butanoyl-CoA + AMP + diphosphate</text>
        <dbReference type="Rhea" id="RHEA:55960"/>
        <dbReference type="ChEBI" id="CHEBI:16244"/>
        <dbReference type="ChEBI" id="CHEBI:30616"/>
        <dbReference type="ChEBI" id="CHEBI:33019"/>
        <dbReference type="ChEBI" id="CHEBI:57287"/>
        <dbReference type="ChEBI" id="CHEBI:61513"/>
        <dbReference type="ChEBI" id="CHEBI:456215"/>
        <dbReference type="EC" id="6.2.1.48"/>
    </reaction>
</comment>
<comment type="catalytic activity">
    <reaction evidence="1">
        <text>crotonobetaine + ATP + CoA = crotonobetainyl-CoA + AMP + diphosphate</text>
        <dbReference type="Rhea" id="RHEA:30079"/>
        <dbReference type="ChEBI" id="CHEBI:17237"/>
        <dbReference type="ChEBI" id="CHEBI:30616"/>
        <dbReference type="ChEBI" id="CHEBI:33019"/>
        <dbReference type="ChEBI" id="CHEBI:57287"/>
        <dbReference type="ChEBI" id="CHEBI:60933"/>
        <dbReference type="ChEBI" id="CHEBI:456215"/>
        <dbReference type="EC" id="6.2.1.48"/>
    </reaction>
</comment>
<comment type="catalytic activity">
    <reaction evidence="1">
        <text>(R)-carnitine + ATP + CoA = (R)-carnitinyl-CoA + AMP + diphosphate</text>
        <dbReference type="Rhea" id="RHEA:28514"/>
        <dbReference type="ChEBI" id="CHEBI:16347"/>
        <dbReference type="ChEBI" id="CHEBI:30616"/>
        <dbReference type="ChEBI" id="CHEBI:33019"/>
        <dbReference type="ChEBI" id="CHEBI:57287"/>
        <dbReference type="ChEBI" id="CHEBI:60932"/>
        <dbReference type="ChEBI" id="CHEBI:456215"/>
        <dbReference type="EC" id="6.2.1.48"/>
    </reaction>
</comment>
<comment type="pathway">
    <text evidence="1">Amine and polyamine metabolism; carnitine metabolism.</text>
</comment>
<comment type="similarity">
    <text evidence="1">Belongs to the ATP-dependent AMP-binding enzyme family.</text>
</comment>
<comment type="sequence caution" evidence="2">
    <conflict type="erroneous initiation">
        <sequence resource="EMBL-CDS" id="BAG75562"/>
    </conflict>
</comment>
<gene>
    <name evidence="1" type="primary">caiC</name>
    <name type="ordered locus">ECSE_0038</name>
</gene>
<keyword id="KW-0436">Ligase</keyword>
<proteinExistence type="inferred from homology"/>
<evidence type="ECO:0000255" key="1">
    <source>
        <dbReference type="HAMAP-Rule" id="MF_01524"/>
    </source>
</evidence>
<evidence type="ECO:0000305" key="2"/>
<feature type="chain" id="PRO_0000383397" description="Crotonobetaine/carnitine--CoA ligase">
    <location>
        <begin position="1"/>
        <end position="517"/>
    </location>
</feature>
<organism>
    <name type="scientific">Escherichia coli (strain SE11)</name>
    <dbReference type="NCBI Taxonomy" id="409438"/>
    <lineage>
        <taxon>Bacteria</taxon>
        <taxon>Pseudomonadati</taxon>
        <taxon>Pseudomonadota</taxon>
        <taxon>Gammaproteobacteria</taxon>
        <taxon>Enterobacterales</taxon>
        <taxon>Enterobacteriaceae</taxon>
        <taxon>Escherichia</taxon>
    </lineage>
</organism>
<reference key="1">
    <citation type="journal article" date="2008" name="DNA Res.">
        <title>Complete genome sequence and comparative analysis of the wild-type commensal Escherichia coli strain SE11 isolated from a healthy adult.</title>
        <authorList>
            <person name="Oshima K."/>
            <person name="Toh H."/>
            <person name="Ogura Y."/>
            <person name="Sasamoto H."/>
            <person name="Morita H."/>
            <person name="Park S.-H."/>
            <person name="Ooka T."/>
            <person name="Iyoda S."/>
            <person name="Taylor T.D."/>
            <person name="Hayashi T."/>
            <person name="Itoh K."/>
            <person name="Hattori M."/>
        </authorList>
    </citation>
    <scope>NUCLEOTIDE SEQUENCE [LARGE SCALE GENOMIC DNA]</scope>
    <source>
        <strain>SE11</strain>
    </source>
</reference>
<accession>B6HYY8</accession>